<feature type="chain" id="PRO_0000226183" description="Ketol-acid reductoisomerase (NADP(+))">
    <location>
        <begin position="1"/>
        <end position="337"/>
    </location>
</feature>
<feature type="domain" description="KARI N-terminal Rossmann" evidence="2">
    <location>
        <begin position="1"/>
        <end position="180"/>
    </location>
</feature>
<feature type="domain" description="KARI C-terminal knotted" evidence="3">
    <location>
        <begin position="181"/>
        <end position="326"/>
    </location>
</feature>
<feature type="active site" evidence="1">
    <location>
        <position position="106"/>
    </location>
</feature>
<feature type="binding site" evidence="1">
    <location>
        <begin position="24"/>
        <end position="27"/>
    </location>
    <ligand>
        <name>NADP(+)</name>
        <dbReference type="ChEBI" id="CHEBI:58349"/>
    </ligand>
</feature>
<feature type="binding site" evidence="1">
    <location>
        <position position="47"/>
    </location>
    <ligand>
        <name>NADP(+)</name>
        <dbReference type="ChEBI" id="CHEBI:58349"/>
    </ligand>
</feature>
<feature type="binding site" evidence="1">
    <location>
        <position position="51"/>
    </location>
    <ligand>
        <name>NADP(+)</name>
        <dbReference type="ChEBI" id="CHEBI:58349"/>
    </ligand>
</feature>
<feature type="binding site" evidence="1">
    <location>
        <position position="132"/>
    </location>
    <ligand>
        <name>NADP(+)</name>
        <dbReference type="ChEBI" id="CHEBI:58349"/>
    </ligand>
</feature>
<feature type="binding site" evidence="1">
    <location>
        <position position="189"/>
    </location>
    <ligand>
        <name>Mg(2+)</name>
        <dbReference type="ChEBI" id="CHEBI:18420"/>
        <label>1</label>
    </ligand>
</feature>
<feature type="binding site" evidence="1">
    <location>
        <position position="189"/>
    </location>
    <ligand>
        <name>Mg(2+)</name>
        <dbReference type="ChEBI" id="CHEBI:18420"/>
        <label>2</label>
    </ligand>
</feature>
<feature type="binding site" evidence="1">
    <location>
        <position position="193"/>
    </location>
    <ligand>
        <name>Mg(2+)</name>
        <dbReference type="ChEBI" id="CHEBI:18420"/>
        <label>1</label>
    </ligand>
</feature>
<feature type="binding site" evidence="1">
    <location>
        <position position="225"/>
    </location>
    <ligand>
        <name>Mg(2+)</name>
        <dbReference type="ChEBI" id="CHEBI:18420"/>
        <label>2</label>
    </ligand>
</feature>
<feature type="binding site" evidence="1">
    <location>
        <position position="229"/>
    </location>
    <ligand>
        <name>Mg(2+)</name>
        <dbReference type="ChEBI" id="CHEBI:18420"/>
        <label>2</label>
    </ligand>
</feature>
<feature type="binding site" evidence="1">
    <location>
        <position position="250"/>
    </location>
    <ligand>
        <name>substrate</name>
    </ligand>
</feature>
<gene>
    <name evidence="1" type="primary">ilvC</name>
    <name type="ordered locus">NGO_1233</name>
</gene>
<evidence type="ECO:0000255" key="1">
    <source>
        <dbReference type="HAMAP-Rule" id="MF_00435"/>
    </source>
</evidence>
<evidence type="ECO:0000255" key="2">
    <source>
        <dbReference type="PROSITE-ProRule" id="PRU01197"/>
    </source>
</evidence>
<evidence type="ECO:0000255" key="3">
    <source>
        <dbReference type="PROSITE-ProRule" id="PRU01198"/>
    </source>
</evidence>
<reference key="1">
    <citation type="submission" date="2003-03" db="EMBL/GenBank/DDBJ databases">
        <title>The complete genome sequence of Neisseria gonorrhoeae.</title>
        <authorList>
            <person name="Lewis L.A."/>
            <person name="Gillaspy A.F."/>
            <person name="McLaughlin R.E."/>
            <person name="Gipson M."/>
            <person name="Ducey T.F."/>
            <person name="Ownbey T."/>
            <person name="Hartman K."/>
            <person name="Nydick C."/>
            <person name="Carson M.B."/>
            <person name="Vaughn J."/>
            <person name="Thomson C."/>
            <person name="Song L."/>
            <person name="Lin S."/>
            <person name="Yuan X."/>
            <person name="Najar F."/>
            <person name="Zhan M."/>
            <person name="Ren Q."/>
            <person name="Zhu H."/>
            <person name="Qi S."/>
            <person name="Kenton S.M."/>
            <person name="Lai H."/>
            <person name="White J.D."/>
            <person name="Clifton S."/>
            <person name="Roe B.A."/>
            <person name="Dyer D.W."/>
        </authorList>
    </citation>
    <scope>NUCLEOTIDE SEQUENCE [LARGE SCALE GENOMIC DNA]</scope>
    <source>
        <strain>ATCC 700825 / FA 1090</strain>
    </source>
</reference>
<protein>
    <recommendedName>
        <fullName evidence="1">Ketol-acid reductoisomerase (NADP(+))</fullName>
        <shortName evidence="1">KARI</shortName>
        <ecNumber evidence="1">1.1.1.86</ecNumber>
    </recommendedName>
    <alternativeName>
        <fullName evidence="1">Acetohydroxy-acid isomeroreductase</fullName>
        <shortName evidence="1">AHIR</shortName>
    </alternativeName>
    <alternativeName>
        <fullName evidence="1">Alpha-keto-beta-hydroxylacyl reductoisomerase</fullName>
    </alternativeName>
    <alternativeName>
        <fullName evidence="1">Ketol-acid reductoisomerase type 1</fullName>
    </alternativeName>
    <alternativeName>
        <fullName evidence="1">Ketol-acid reductoisomerase type I</fullName>
    </alternativeName>
</protein>
<proteinExistence type="inferred from homology"/>
<name>ILVC_NEIG1</name>
<organism>
    <name type="scientific">Neisseria gonorrhoeae (strain ATCC 700825 / FA 1090)</name>
    <dbReference type="NCBI Taxonomy" id="242231"/>
    <lineage>
        <taxon>Bacteria</taxon>
        <taxon>Pseudomonadati</taxon>
        <taxon>Pseudomonadota</taxon>
        <taxon>Betaproteobacteria</taxon>
        <taxon>Neisseriales</taxon>
        <taxon>Neisseriaceae</taxon>
        <taxon>Neisseria</taxon>
    </lineage>
</organism>
<comment type="function">
    <text evidence="1">Involved in the biosynthesis of branched-chain amino acids (BCAA). Catalyzes an alkyl-migration followed by a ketol-acid reduction of (S)-2-acetolactate (S2AL) to yield (R)-2,3-dihydroxy-isovalerate. In the isomerase reaction, S2AL is rearranged via a Mg-dependent methyl migration to produce 3-hydroxy-3-methyl-2-ketobutyrate (HMKB). In the reductase reaction, this 2-ketoacid undergoes a metal-dependent reduction by NADPH to yield (R)-2,3-dihydroxy-isovalerate.</text>
</comment>
<comment type="catalytic activity">
    <reaction evidence="1">
        <text>(2R)-2,3-dihydroxy-3-methylbutanoate + NADP(+) = (2S)-2-acetolactate + NADPH + H(+)</text>
        <dbReference type="Rhea" id="RHEA:22068"/>
        <dbReference type="ChEBI" id="CHEBI:15378"/>
        <dbReference type="ChEBI" id="CHEBI:49072"/>
        <dbReference type="ChEBI" id="CHEBI:57783"/>
        <dbReference type="ChEBI" id="CHEBI:58349"/>
        <dbReference type="ChEBI" id="CHEBI:58476"/>
        <dbReference type="EC" id="1.1.1.86"/>
    </reaction>
</comment>
<comment type="catalytic activity">
    <reaction evidence="1">
        <text>(2R,3R)-2,3-dihydroxy-3-methylpentanoate + NADP(+) = (S)-2-ethyl-2-hydroxy-3-oxobutanoate + NADPH + H(+)</text>
        <dbReference type="Rhea" id="RHEA:13493"/>
        <dbReference type="ChEBI" id="CHEBI:15378"/>
        <dbReference type="ChEBI" id="CHEBI:49256"/>
        <dbReference type="ChEBI" id="CHEBI:49258"/>
        <dbReference type="ChEBI" id="CHEBI:57783"/>
        <dbReference type="ChEBI" id="CHEBI:58349"/>
        <dbReference type="EC" id="1.1.1.86"/>
    </reaction>
</comment>
<comment type="cofactor">
    <cofactor evidence="1">
        <name>Mg(2+)</name>
        <dbReference type="ChEBI" id="CHEBI:18420"/>
    </cofactor>
    <text evidence="1">Binds 2 magnesium ions per subunit.</text>
</comment>
<comment type="pathway">
    <text evidence="1">Amino-acid biosynthesis; L-isoleucine biosynthesis; L-isoleucine from 2-oxobutanoate: step 2/4.</text>
</comment>
<comment type="pathway">
    <text evidence="1">Amino-acid biosynthesis; L-valine biosynthesis; L-valine from pyruvate: step 2/4.</text>
</comment>
<comment type="similarity">
    <text evidence="1">Belongs to the ketol-acid reductoisomerase family.</text>
</comment>
<sequence length="337" mass="36417">MQVYYDKDADLSLIKGKTVAIIGYGSQGHAHAANLKDSGVNVVIGLRHGSSWKKAEAAGHVVKTVAEATKEADVVMLLLPDETMPAVYHAEVAANLKEGATLAFAHGFNVHYNQIVPRADLDVIMVAPKGPGHTVRSEYKRGGGVPSLIAVYQDNSGKAKDIALSYAAANGGTKGGVIETTFREETETDLFGEQAVLCGGVAELIKAGFETLTEAGYAPEMAYFECLHEMKLIVDLIFEGGIANMNYSISNNAEYGEYVTGPEVVNASSKEAMRNALKRIQTGEYAKMFIQEGNVNYASMTARRRLNADHQVEKVGARLRAMMPWITANKLVDQDKN</sequence>
<dbReference type="EC" id="1.1.1.86" evidence="1"/>
<dbReference type="EMBL" id="AE004969">
    <property type="protein sequence ID" value="AAW89892.1"/>
    <property type="molecule type" value="Genomic_DNA"/>
</dbReference>
<dbReference type="RefSeq" id="WP_003689683.1">
    <property type="nucleotide sequence ID" value="NC_002946.2"/>
</dbReference>
<dbReference type="RefSeq" id="YP_208304.1">
    <property type="nucleotide sequence ID" value="NC_002946.2"/>
</dbReference>
<dbReference type="SMR" id="Q5F7E5"/>
<dbReference type="STRING" id="242231.NGO_1233"/>
<dbReference type="GeneID" id="66752488"/>
<dbReference type="KEGG" id="ngo:NGO_1233"/>
<dbReference type="PATRIC" id="fig|242231.10.peg.1450"/>
<dbReference type="HOGENOM" id="CLU_033821_0_1_4"/>
<dbReference type="UniPathway" id="UPA00047">
    <property type="reaction ID" value="UER00056"/>
</dbReference>
<dbReference type="UniPathway" id="UPA00049">
    <property type="reaction ID" value="UER00060"/>
</dbReference>
<dbReference type="Proteomes" id="UP000000535">
    <property type="component" value="Chromosome"/>
</dbReference>
<dbReference type="GO" id="GO:0005829">
    <property type="term" value="C:cytosol"/>
    <property type="evidence" value="ECO:0007669"/>
    <property type="project" value="TreeGrafter"/>
</dbReference>
<dbReference type="GO" id="GO:0004455">
    <property type="term" value="F:ketol-acid reductoisomerase activity"/>
    <property type="evidence" value="ECO:0007669"/>
    <property type="project" value="UniProtKB-UniRule"/>
</dbReference>
<dbReference type="GO" id="GO:0000287">
    <property type="term" value="F:magnesium ion binding"/>
    <property type="evidence" value="ECO:0007669"/>
    <property type="project" value="UniProtKB-UniRule"/>
</dbReference>
<dbReference type="GO" id="GO:0050661">
    <property type="term" value="F:NADP binding"/>
    <property type="evidence" value="ECO:0007669"/>
    <property type="project" value="InterPro"/>
</dbReference>
<dbReference type="GO" id="GO:0009097">
    <property type="term" value="P:isoleucine biosynthetic process"/>
    <property type="evidence" value="ECO:0007669"/>
    <property type="project" value="UniProtKB-UniRule"/>
</dbReference>
<dbReference type="GO" id="GO:0009099">
    <property type="term" value="P:L-valine biosynthetic process"/>
    <property type="evidence" value="ECO:0007669"/>
    <property type="project" value="UniProtKB-UniRule"/>
</dbReference>
<dbReference type="FunFam" id="3.40.50.720:FF:000023">
    <property type="entry name" value="Ketol-acid reductoisomerase (NADP(+))"/>
    <property type="match status" value="1"/>
</dbReference>
<dbReference type="Gene3D" id="6.10.240.10">
    <property type="match status" value="1"/>
</dbReference>
<dbReference type="Gene3D" id="3.40.50.720">
    <property type="entry name" value="NAD(P)-binding Rossmann-like Domain"/>
    <property type="match status" value="1"/>
</dbReference>
<dbReference type="HAMAP" id="MF_00435">
    <property type="entry name" value="IlvC"/>
    <property type="match status" value="1"/>
</dbReference>
<dbReference type="InterPro" id="IPR008927">
    <property type="entry name" value="6-PGluconate_DH-like_C_sf"/>
</dbReference>
<dbReference type="InterPro" id="IPR013023">
    <property type="entry name" value="KARI"/>
</dbReference>
<dbReference type="InterPro" id="IPR000506">
    <property type="entry name" value="KARI_C"/>
</dbReference>
<dbReference type="InterPro" id="IPR013116">
    <property type="entry name" value="KARI_N"/>
</dbReference>
<dbReference type="InterPro" id="IPR014359">
    <property type="entry name" value="KARI_prok"/>
</dbReference>
<dbReference type="InterPro" id="IPR036291">
    <property type="entry name" value="NAD(P)-bd_dom_sf"/>
</dbReference>
<dbReference type="NCBIfam" id="TIGR00465">
    <property type="entry name" value="ilvC"/>
    <property type="match status" value="1"/>
</dbReference>
<dbReference type="NCBIfam" id="NF004017">
    <property type="entry name" value="PRK05479.1"/>
    <property type="match status" value="1"/>
</dbReference>
<dbReference type="NCBIfam" id="NF009940">
    <property type="entry name" value="PRK13403.1"/>
    <property type="match status" value="1"/>
</dbReference>
<dbReference type="PANTHER" id="PTHR21371">
    <property type="entry name" value="KETOL-ACID REDUCTOISOMERASE, MITOCHONDRIAL"/>
    <property type="match status" value="1"/>
</dbReference>
<dbReference type="PANTHER" id="PTHR21371:SF1">
    <property type="entry name" value="KETOL-ACID REDUCTOISOMERASE, MITOCHONDRIAL"/>
    <property type="match status" value="1"/>
</dbReference>
<dbReference type="Pfam" id="PF01450">
    <property type="entry name" value="KARI_C"/>
    <property type="match status" value="1"/>
</dbReference>
<dbReference type="Pfam" id="PF07991">
    <property type="entry name" value="KARI_N"/>
    <property type="match status" value="1"/>
</dbReference>
<dbReference type="PIRSF" id="PIRSF000116">
    <property type="entry name" value="IlvC_gammaproteo"/>
    <property type="match status" value="1"/>
</dbReference>
<dbReference type="SUPFAM" id="SSF48179">
    <property type="entry name" value="6-phosphogluconate dehydrogenase C-terminal domain-like"/>
    <property type="match status" value="1"/>
</dbReference>
<dbReference type="SUPFAM" id="SSF51735">
    <property type="entry name" value="NAD(P)-binding Rossmann-fold domains"/>
    <property type="match status" value="1"/>
</dbReference>
<dbReference type="PROSITE" id="PS51851">
    <property type="entry name" value="KARI_C"/>
    <property type="match status" value="1"/>
</dbReference>
<dbReference type="PROSITE" id="PS51850">
    <property type="entry name" value="KARI_N"/>
    <property type="match status" value="1"/>
</dbReference>
<accession>Q5F7E5</accession>
<keyword id="KW-0028">Amino-acid biosynthesis</keyword>
<keyword id="KW-0100">Branched-chain amino acid biosynthesis</keyword>
<keyword id="KW-0460">Magnesium</keyword>
<keyword id="KW-0479">Metal-binding</keyword>
<keyword id="KW-0521">NADP</keyword>
<keyword id="KW-0560">Oxidoreductase</keyword>
<keyword id="KW-1185">Reference proteome</keyword>